<dbReference type="EC" id="3.6.5.-" evidence="1"/>
<dbReference type="EMBL" id="CP000611">
    <property type="protein sequence ID" value="ABQ74236.1"/>
    <property type="molecule type" value="Genomic_DNA"/>
</dbReference>
<dbReference type="SMR" id="A5U5D6"/>
<dbReference type="KEGG" id="mra:MRA_2466"/>
<dbReference type="eggNOG" id="COG0536">
    <property type="taxonomic scope" value="Bacteria"/>
</dbReference>
<dbReference type="HOGENOM" id="CLU_011747_2_1_11"/>
<dbReference type="Proteomes" id="UP000001988">
    <property type="component" value="Chromosome"/>
</dbReference>
<dbReference type="GO" id="GO:0005737">
    <property type="term" value="C:cytoplasm"/>
    <property type="evidence" value="ECO:0007669"/>
    <property type="project" value="UniProtKB-SubCell"/>
</dbReference>
<dbReference type="GO" id="GO:0005525">
    <property type="term" value="F:GTP binding"/>
    <property type="evidence" value="ECO:0007669"/>
    <property type="project" value="UniProtKB-UniRule"/>
</dbReference>
<dbReference type="GO" id="GO:0003924">
    <property type="term" value="F:GTPase activity"/>
    <property type="evidence" value="ECO:0007669"/>
    <property type="project" value="UniProtKB-UniRule"/>
</dbReference>
<dbReference type="GO" id="GO:0000287">
    <property type="term" value="F:magnesium ion binding"/>
    <property type="evidence" value="ECO:0007669"/>
    <property type="project" value="InterPro"/>
</dbReference>
<dbReference type="GO" id="GO:0042254">
    <property type="term" value="P:ribosome biogenesis"/>
    <property type="evidence" value="ECO:0007669"/>
    <property type="project" value="UniProtKB-UniRule"/>
</dbReference>
<dbReference type="CDD" id="cd01898">
    <property type="entry name" value="Obg"/>
    <property type="match status" value="1"/>
</dbReference>
<dbReference type="FunFam" id="2.70.210.12:FF:000001">
    <property type="entry name" value="GTPase Obg"/>
    <property type="match status" value="1"/>
</dbReference>
<dbReference type="FunFam" id="3.30.300.350:FF:000002">
    <property type="entry name" value="GTPase Obg"/>
    <property type="match status" value="1"/>
</dbReference>
<dbReference type="FunFam" id="3.40.50.300:FF:000515">
    <property type="entry name" value="GTPase Obg"/>
    <property type="match status" value="1"/>
</dbReference>
<dbReference type="Gene3D" id="3.30.300.350">
    <property type="entry name" value="GTP-binding protein OBG, C-terminal domain"/>
    <property type="match status" value="1"/>
</dbReference>
<dbReference type="Gene3D" id="2.70.210.12">
    <property type="entry name" value="GTP1/OBG domain"/>
    <property type="match status" value="1"/>
</dbReference>
<dbReference type="Gene3D" id="3.40.50.300">
    <property type="entry name" value="P-loop containing nucleotide triphosphate hydrolases"/>
    <property type="match status" value="1"/>
</dbReference>
<dbReference type="HAMAP" id="MF_01454">
    <property type="entry name" value="GTPase_Obg"/>
    <property type="match status" value="1"/>
</dbReference>
<dbReference type="InterPro" id="IPR031167">
    <property type="entry name" value="G_OBG"/>
</dbReference>
<dbReference type="InterPro" id="IPR006073">
    <property type="entry name" value="GTP-bd"/>
</dbReference>
<dbReference type="InterPro" id="IPR014100">
    <property type="entry name" value="GTP-bd_Obg/CgtA"/>
</dbReference>
<dbReference type="InterPro" id="IPR036346">
    <property type="entry name" value="GTP-bd_prot_GTP1/OBG_C_sf"/>
</dbReference>
<dbReference type="InterPro" id="IPR006074">
    <property type="entry name" value="GTP1-OBG_CS"/>
</dbReference>
<dbReference type="InterPro" id="IPR006169">
    <property type="entry name" value="GTP1_OBG_dom"/>
</dbReference>
<dbReference type="InterPro" id="IPR036726">
    <property type="entry name" value="GTP1_OBG_dom_sf"/>
</dbReference>
<dbReference type="InterPro" id="IPR045086">
    <property type="entry name" value="OBG_GTPase"/>
</dbReference>
<dbReference type="InterPro" id="IPR015349">
    <property type="entry name" value="OCT_dom"/>
</dbReference>
<dbReference type="InterPro" id="IPR027417">
    <property type="entry name" value="P-loop_NTPase"/>
</dbReference>
<dbReference type="NCBIfam" id="TIGR02729">
    <property type="entry name" value="Obg_CgtA"/>
    <property type="match status" value="1"/>
</dbReference>
<dbReference type="NCBIfam" id="TIGR03595">
    <property type="entry name" value="Obg_CgtA_exten"/>
    <property type="match status" value="1"/>
</dbReference>
<dbReference type="NCBIfam" id="NF008954">
    <property type="entry name" value="PRK12296.1"/>
    <property type="match status" value="1"/>
</dbReference>
<dbReference type="NCBIfam" id="NF008955">
    <property type="entry name" value="PRK12297.1"/>
    <property type="match status" value="1"/>
</dbReference>
<dbReference type="NCBIfam" id="NF008956">
    <property type="entry name" value="PRK12299.1"/>
    <property type="match status" value="1"/>
</dbReference>
<dbReference type="PANTHER" id="PTHR11702">
    <property type="entry name" value="DEVELOPMENTALLY REGULATED GTP-BINDING PROTEIN-RELATED"/>
    <property type="match status" value="1"/>
</dbReference>
<dbReference type="PANTHER" id="PTHR11702:SF31">
    <property type="entry name" value="MITOCHONDRIAL RIBOSOME-ASSOCIATED GTPASE 2"/>
    <property type="match status" value="1"/>
</dbReference>
<dbReference type="Pfam" id="PF09269">
    <property type="entry name" value="DUF1967"/>
    <property type="match status" value="1"/>
</dbReference>
<dbReference type="Pfam" id="PF01018">
    <property type="entry name" value="GTP1_OBG"/>
    <property type="match status" value="1"/>
</dbReference>
<dbReference type="Pfam" id="PF01926">
    <property type="entry name" value="MMR_HSR1"/>
    <property type="match status" value="1"/>
</dbReference>
<dbReference type="PRINTS" id="PR00326">
    <property type="entry name" value="GTP1OBG"/>
</dbReference>
<dbReference type="SUPFAM" id="SSF102741">
    <property type="entry name" value="Obg GTP-binding protein C-terminal domain"/>
    <property type="match status" value="1"/>
</dbReference>
<dbReference type="SUPFAM" id="SSF82051">
    <property type="entry name" value="Obg GTP-binding protein N-terminal domain"/>
    <property type="match status" value="1"/>
</dbReference>
<dbReference type="SUPFAM" id="SSF52540">
    <property type="entry name" value="P-loop containing nucleoside triphosphate hydrolases"/>
    <property type="match status" value="1"/>
</dbReference>
<dbReference type="PROSITE" id="PS51710">
    <property type="entry name" value="G_OBG"/>
    <property type="match status" value="1"/>
</dbReference>
<dbReference type="PROSITE" id="PS00905">
    <property type="entry name" value="GTP1_OBG"/>
    <property type="match status" value="1"/>
</dbReference>
<dbReference type="PROSITE" id="PS51883">
    <property type="entry name" value="OBG"/>
    <property type="match status" value="1"/>
</dbReference>
<dbReference type="PROSITE" id="PS51881">
    <property type="entry name" value="OCT"/>
    <property type="match status" value="1"/>
</dbReference>
<evidence type="ECO:0000255" key="1">
    <source>
        <dbReference type="HAMAP-Rule" id="MF_01454"/>
    </source>
</evidence>
<evidence type="ECO:0000255" key="2">
    <source>
        <dbReference type="PROSITE-ProRule" id="PRU01229"/>
    </source>
</evidence>
<evidence type="ECO:0000255" key="3">
    <source>
        <dbReference type="PROSITE-ProRule" id="PRU01231"/>
    </source>
</evidence>
<evidence type="ECO:0000256" key="4">
    <source>
        <dbReference type="SAM" id="MobiDB-lite"/>
    </source>
</evidence>
<name>OBG_MYCTA</name>
<reference key="1">
    <citation type="journal article" date="2008" name="PLoS ONE">
        <title>Genetic basis of virulence attenuation revealed by comparative genomic analysis of Mycobacterium tuberculosis strain H37Ra versus H37Rv.</title>
        <authorList>
            <person name="Zheng H."/>
            <person name="Lu L."/>
            <person name="Wang B."/>
            <person name="Pu S."/>
            <person name="Zhang X."/>
            <person name="Zhu G."/>
            <person name="Shi W."/>
            <person name="Zhang L."/>
            <person name="Wang H."/>
            <person name="Wang S."/>
            <person name="Zhao G."/>
            <person name="Zhang Y."/>
        </authorList>
    </citation>
    <scope>NUCLEOTIDE SEQUENCE [LARGE SCALE GENOMIC DNA]</scope>
    <source>
        <strain>ATCC 25177 / H37Ra</strain>
    </source>
</reference>
<organism>
    <name type="scientific">Mycobacterium tuberculosis (strain ATCC 25177 / H37Ra)</name>
    <dbReference type="NCBI Taxonomy" id="419947"/>
    <lineage>
        <taxon>Bacteria</taxon>
        <taxon>Bacillati</taxon>
        <taxon>Actinomycetota</taxon>
        <taxon>Actinomycetes</taxon>
        <taxon>Mycobacteriales</taxon>
        <taxon>Mycobacteriaceae</taxon>
        <taxon>Mycobacterium</taxon>
        <taxon>Mycobacterium tuberculosis complex</taxon>
    </lineage>
</organism>
<comment type="function">
    <text evidence="1">An essential GTPase which binds GTP, GDP and possibly (p)ppGpp with moderate affinity, with high nucleotide exchange rates and a fairly low GTP hydrolysis rate. Plays a role in control of the cell cycle, stress response, ribosome biogenesis and in those bacteria that undergo differentiation, in morphogenesis control.</text>
</comment>
<comment type="cofactor">
    <cofactor evidence="1">
        <name>Mg(2+)</name>
        <dbReference type="ChEBI" id="CHEBI:18420"/>
    </cofactor>
</comment>
<comment type="subunit">
    <text evidence="1">Monomer.</text>
</comment>
<comment type="subcellular location">
    <subcellularLocation>
        <location evidence="1">Cytoplasm</location>
    </subcellularLocation>
</comment>
<comment type="similarity">
    <text evidence="1">Belongs to the TRAFAC class OBG-HflX-like GTPase superfamily. OBG GTPase family.</text>
</comment>
<proteinExistence type="inferred from homology"/>
<protein>
    <recommendedName>
        <fullName evidence="1">GTPase Obg</fullName>
        <ecNumber evidence="1">3.6.5.-</ecNumber>
    </recommendedName>
    <alternativeName>
        <fullName evidence="1">GTP-binding protein Obg</fullName>
    </alternativeName>
</protein>
<feature type="chain" id="PRO_0000386063" description="GTPase Obg">
    <location>
        <begin position="1"/>
        <end position="479"/>
    </location>
</feature>
<feature type="domain" description="Obg" evidence="3">
    <location>
        <begin position="2"/>
        <end position="159"/>
    </location>
</feature>
<feature type="domain" description="OBG-type G" evidence="1">
    <location>
        <begin position="160"/>
        <end position="340"/>
    </location>
</feature>
<feature type="domain" description="OCT" evidence="2">
    <location>
        <begin position="358"/>
        <end position="436"/>
    </location>
</feature>
<feature type="region of interest" description="Disordered" evidence="4">
    <location>
        <begin position="434"/>
        <end position="479"/>
    </location>
</feature>
<feature type="compositionally biased region" description="Basic and acidic residues" evidence="4">
    <location>
        <begin position="451"/>
        <end position="468"/>
    </location>
</feature>
<feature type="compositionally biased region" description="Basic residues" evidence="4">
    <location>
        <begin position="469"/>
        <end position="479"/>
    </location>
</feature>
<feature type="binding site" evidence="1">
    <location>
        <begin position="166"/>
        <end position="173"/>
    </location>
    <ligand>
        <name>GTP</name>
        <dbReference type="ChEBI" id="CHEBI:37565"/>
    </ligand>
</feature>
<feature type="binding site" evidence="1">
    <location>
        <position position="173"/>
    </location>
    <ligand>
        <name>Mg(2+)</name>
        <dbReference type="ChEBI" id="CHEBI:18420"/>
    </ligand>
</feature>
<feature type="binding site" evidence="1">
    <location>
        <begin position="191"/>
        <end position="195"/>
    </location>
    <ligand>
        <name>GTP</name>
        <dbReference type="ChEBI" id="CHEBI:37565"/>
    </ligand>
</feature>
<feature type="binding site" evidence="1">
    <location>
        <position position="193"/>
    </location>
    <ligand>
        <name>Mg(2+)</name>
        <dbReference type="ChEBI" id="CHEBI:18420"/>
    </ligand>
</feature>
<feature type="binding site" evidence="1">
    <location>
        <begin position="212"/>
        <end position="215"/>
    </location>
    <ligand>
        <name>GTP</name>
        <dbReference type="ChEBI" id="CHEBI:37565"/>
    </ligand>
</feature>
<feature type="binding site" evidence="1">
    <location>
        <begin position="292"/>
        <end position="295"/>
    </location>
    <ligand>
        <name>GTP</name>
        <dbReference type="ChEBI" id="CHEBI:37565"/>
    </ligand>
</feature>
<feature type="binding site" evidence="1">
    <location>
        <begin position="321"/>
        <end position="323"/>
    </location>
    <ligand>
        <name>GTP</name>
        <dbReference type="ChEBI" id="CHEBI:37565"/>
    </ligand>
</feature>
<accession>A5U5D6</accession>
<gene>
    <name evidence="1" type="primary">obg</name>
    <name type="ordered locus">MRA_2466</name>
</gene>
<sequence>MPRFVDRVVIHTRAGSGGNGCASVHREKFKPLGGPDGGNGGRGGSIVFVVDPQVHTLLDFHFRPHLTAASGKHGMGNNRDGAAGADLEVKVPEGTVVLDENGRLLADLVGAGTRFEAAAGGRGGLGNAALASRVRKAPGFALLGEKGQSRDLTLELKTVADVGLVGFPSAGKSSLVSAISAAKPKIADYPFTTLVPNLGVVSAGEHAFTVADVPGLIPGASRGRGLGLDFLRHIERCAVLVHVVDCATAEPGRDPISDIDALETELACYTPTLQGDAALGDLAARPRAVVLNKIDVPEARELAEFVRDDIAQRGWPVFCVSTATRENLQPLIFGLSQMISDYNAARPVAVPRRPVIRPIPVDDSGFTVEPDGHGGFVVSGARPERWIDQTNFDNDEAVGYLADRLARLGVEEELLRLGARSGCAVTIGEMTFDWEPQTPAGEPVAMSGRGTDPRLDSNKRVGAAERKAARSRRREHGDG</sequence>
<keyword id="KW-0963">Cytoplasm</keyword>
<keyword id="KW-0342">GTP-binding</keyword>
<keyword id="KW-0378">Hydrolase</keyword>
<keyword id="KW-0460">Magnesium</keyword>
<keyword id="KW-0479">Metal-binding</keyword>
<keyword id="KW-0547">Nucleotide-binding</keyword>
<keyword id="KW-1185">Reference proteome</keyword>